<proteinExistence type="evidence at protein level"/>
<organism>
    <name type="scientific">Caenorhabditis elegans</name>
    <dbReference type="NCBI Taxonomy" id="6239"/>
    <lineage>
        <taxon>Eukaryota</taxon>
        <taxon>Metazoa</taxon>
        <taxon>Ecdysozoa</taxon>
        <taxon>Nematoda</taxon>
        <taxon>Chromadorea</taxon>
        <taxon>Rhabditida</taxon>
        <taxon>Rhabditina</taxon>
        <taxon>Rhabditomorpha</taxon>
        <taxon>Rhabditoidea</taxon>
        <taxon>Rhabditidae</taxon>
        <taxon>Peloderinae</taxon>
        <taxon>Caenorhabditis</taxon>
    </lineage>
</organism>
<evidence type="ECO:0000250" key="1"/>
<evidence type="ECO:0000255" key="2">
    <source>
        <dbReference type="PROSITE-ProRule" id="PRU00691"/>
    </source>
</evidence>
<evidence type="ECO:0000255" key="3">
    <source>
        <dbReference type="PROSITE-ProRule" id="PRU00731"/>
    </source>
</evidence>
<evidence type="ECO:0000269" key="4">
    <source>
    </source>
</evidence>
<evidence type="ECO:0000269" key="5">
    <source>
    </source>
</evidence>
<evidence type="ECO:0000269" key="6">
    <source>
    </source>
</evidence>
<accession>Q9TW67</accession>
<accession>Q9NBD6</accession>
<protein>
    <recommendedName>
        <fullName>Peptide-N(4)-(N-acetyl-beta-glucosaminyl)asparagine amidase</fullName>
        <ecNumber>3.5.1.52</ecNumber>
    </recommendedName>
    <alternativeName>
        <fullName>Peptide:N-glycanase</fullName>
        <shortName>PNGase</shortName>
    </alternativeName>
</protein>
<comment type="function">
    <text evidence="4 5 6">Specifically deglycosylates the denatured form of N-linked glycoproteins in the cytoplasm and assists their proteasome-mediated degradation (PubMed:17509531, PubMed:17522090). Cleaves the beta-aspartyl-glucosamine (GlcNAc) of the glycan and the amide side chain of Asn, converting Asn to Asp (PubMed:17522090). Prefers proteins containing high-mannose over those bearing complex type oligosaccharides (PubMed:17522090). Can recognize misfolded proteins in the endoplasmic reticulum that are exported to the cytosol to be destroyed and deglycosylate them, while it has no activity toward native proteins (PubMed:17509531). Deglycosylation is a prerequisite for subsequent proteasome-mediated degradation of some, but not all, misfolded glycoproteins (PubMed:17509531). Also displays oxidoreductase (thioredoxin) activity (PubMed:17509531, PubMed:17522090). Involved in regulating the expression of proteasomal subunits such as rpt-3 in order to confer resistance to proteasomal dysfunction (PubMed:27528192).</text>
</comment>
<comment type="catalytic activity">
    <reaction>
        <text>Hydrolysis of an N(4)-(acetyl-beta-D-glucosaminyl)asparagine residue in which the glucosamine residue may be further glycosylated, to yield a (substituted) N-acetyl-beta-D-glucosaminylamine and a peptide containing an aspartate residue.</text>
        <dbReference type="EC" id="3.5.1.52"/>
    </reaction>
</comment>
<comment type="cofactor">
    <cofactor evidence="1">
        <name>Zn(2+)</name>
        <dbReference type="ChEBI" id="CHEBI:29105"/>
    </cofactor>
    <text evidence="1">Binds 1 zinc ion per subunit.</text>
</comment>
<comment type="activity regulation">
    <text evidence="5">Inhibited by Zn(2+) and z-VAD-fmk (caspase inhibitor) but unaffected by EDTA.</text>
</comment>
<comment type="subcellular location">
    <subcellularLocation>
        <location evidence="5">Cytoplasm</location>
    </subcellularLocation>
    <subcellularLocation>
        <location evidence="5">Endoplasmic reticulum</location>
    </subcellularLocation>
    <text>ER localization inferred from partial colocalization with an ER marker, membrane protein PIG-X.</text>
</comment>
<comment type="disruption phenotype">
    <text evidence="6">Double knockout with rpt-5 RNAi results in failed expression of the proteasomal subunit rpt-3.</text>
</comment>
<comment type="similarity">
    <text evidence="3">Belongs to the transglutaminase-like superfamily. PNGase family.</text>
</comment>
<name>NGLY1_CAEEL</name>
<feature type="chain" id="PRO_0000248978" description="Peptide-N(4)-(N-acetyl-beta-glucosaminyl)asparagine amidase">
    <location>
        <begin position="1"/>
        <end position="606"/>
    </location>
</feature>
<feature type="domain" description="Thioredoxin" evidence="2">
    <location>
        <begin position="2"/>
        <end position="108"/>
    </location>
</feature>
<feature type="domain" description="PAW" evidence="3">
    <location>
        <begin position="404"/>
        <end position="606"/>
    </location>
</feature>
<feature type="active site" description="Nucleophile">
    <location>
        <position position="251"/>
    </location>
</feature>
<feature type="active site" evidence="1">
    <location>
        <position position="278"/>
    </location>
</feature>
<feature type="active site" evidence="1">
    <location>
        <position position="295"/>
    </location>
</feature>
<feature type="binding site" evidence="1">
    <location>
        <position position="191"/>
    </location>
    <ligand>
        <name>Zn(2+)</name>
        <dbReference type="ChEBI" id="CHEBI:29105"/>
    </ligand>
</feature>
<feature type="binding site" evidence="1">
    <location>
        <position position="194"/>
    </location>
    <ligand>
        <name>Zn(2+)</name>
        <dbReference type="ChEBI" id="CHEBI:29105"/>
    </ligand>
</feature>
<feature type="binding site" evidence="1">
    <location>
        <position position="225"/>
    </location>
    <ligand>
        <name>Zn(2+)</name>
        <dbReference type="ChEBI" id="CHEBI:29105"/>
    </ligand>
</feature>
<feature type="binding site" evidence="1">
    <location>
        <position position="228"/>
    </location>
    <ligand>
        <name>Zn(2+)</name>
        <dbReference type="ChEBI" id="CHEBI:29105"/>
    </ligand>
</feature>
<feature type="mutagenesis site" description="Loss of PNGase activity." evidence="4">
    <original>C</original>
    <variation>Y</variation>
    <location>
        <position position="251"/>
    </location>
</feature>
<feature type="mutagenesis site" description="In mg561; defective expression of the proteasomal subunit rpt-3 in a pbs-5 (proteasomal subunit) mutant background." evidence="6">
    <original>G</original>
    <variation>R</variation>
    <location>
        <position position="498"/>
    </location>
</feature>
<keyword id="KW-0963">Cytoplasm</keyword>
<keyword id="KW-0256">Endoplasmic reticulum</keyword>
<keyword id="KW-0378">Hydrolase</keyword>
<keyword id="KW-0479">Metal-binding</keyword>
<keyword id="KW-1185">Reference proteome</keyword>
<keyword id="KW-0862">Zinc</keyword>
<gene>
    <name type="primary">png-1</name>
    <name type="ORF">F56G4.5</name>
</gene>
<dbReference type="EC" id="3.5.1.52"/>
<dbReference type="EMBL" id="Z81552">
    <property type="protein sequence ID" value="CAB04487.2"/>
    <property type="molecule type" value="Genomic_DNA"/>
</dbReference>
<dbReference type="EMBL" id="AL117201">
    <property type="protein sequence ID" value="CAB04487.2"/>
    <property type="status" value="JOINED"/>
    <property type="molecule type" value="Genomic_DNA"/>
</dbReference>
<dbReference type="EMBL" id="AF250925">
    <property type="protein sequence ID" value="AAF74721.1"/>
    <property type="molecule type" value="mRNA"/>
</dbReference>
<dbReference type="PIR" id="E87921">
    <property type="entry name" value="E87921"/>
</dbReference>
<dbReference type="PIR" id="T31557">
    <property type="entry name" value="T31557"/>
</dbReference>
<dbReference type="RefSeq" id="NP_492913.1">
    <property type="nucleotide sequence ID" value="NM_060512.5"/>
</dbReference>
<dbReference type="SMR" id="Q9TW67"/>
<dbReference type="BioGRID" id="38436">
    <property type="interactions" value="5"/>
</dbReference>
<dbReference type="DIP" id="DIP-24462N"/>
<dbReference type="FunCoup" id="Q9TW67">
    <property type="interactions" value="3067"/>
</dbReference>
<dbReference type="IntAct" id="Q9TW67">
    <property type="interactions" value="2"/>
</dbReference>
<dbReference type="STRING" id="6239.F56G4.5.1"/>
<dbReference type="PaxDb" id="6239-F56G4.5"/>
<dbReference type="PeptideAtlas" id="Q9TW67"/>
<dbReference type="EnsemblMetazoa" id="F56G4.5.1">
    <property type="protein sequence ID" value="F56G4.5.1"/>
    <property type="gene ID" value="WBGene00010160"/>
</dbReference>
<dbReference type="GeneID" id="173028"/>
<dbReference type="KEGG" id="cel:CELE_F56G4.5"/>
<dbReference type="AGR" id="WB:WBGene00010160"/>
<dbReference type="CTD" id="173028"/>
<dbReference type="WormBase" id="F56G4.5">
    <property type="protein sequence ID" value="CE23786"/>
    <property type="gene ID" value="WBGene00010160"/>
    <property type="gene designation" value="png-1"/>
</dbReference>
<dbReference type="eggNOG" id="KOG0907">
    <property type="taxonomic scope" value="Eukaryota"/>
</dbReference>
<dbReference type="eggNOG" id="KOG0909">
    <property type="taxonomic scope" value="Eukaryota"/>
</dbReference>
<dbReference type="GeneTree" id="ENSGT00390000006540"/>
<dbReference type="HOGENOM" id="CLU_030187_2_0_1"/>
<dbReference type="InParanoid" id="Q9TW67"/>
<dbReference type="OMA" id="ENHYCSQ"/>
<dbReference type="OrthoDB" id="409136at2759"/>
<dbReference type="PhylomeDB" id="Q9TW67"/>
<dbReference type="BRENDA" id="3.5.1.52">
    <property type="organism ID" value="1045"/>
</dbReference>
<dbReference type="Reactome" id="R-CEL-532668">
    <property type="pathway name" value="N-glycan trimming in the ER and Calnexin/Calreticulin cycle"/>
</dbReference>
<dbReference type="PRO" id="PR:Q9TW67"/>
<dbReference type="Proteomes" id="UP000001940">
    <property type="component" value="Chromosome I"/>
</dbReference>
<dbReference type="Bgee" id="WBGene00010160">
    <property type="expression patterns" value="Expressed in germ line (C elegans) and 4 other cell types or tissues"/>
</dbReference>
<dbReference type="GO" id="GO:0005737">
    <property type="term" value="C:cytoplasm"/>
    <property type="evidence" value="ECO:0000314"/>
    <property type="project" value="WormBase"/>
</dbReference>
<dbReference type="GO" id="GO:0005829">
    <property type="term" value="C:cytosol"/>
    <property type="evidence" value="ECO:0000318"/>
    <property type="project" value="GO_Central"/>
</dbReference>
<dbReference type="GO" id="GO:0005783">
    <property type="term" value="C:endoplasmic reticulum"/>
    <property type="evidence" value="ECO:0007669"/>
    <property type="project" value="UniProtKB-SubCell"/>
</dbReference>
<dbReference type="GO" id="GO:0005634">
    <property type="term" value="C:nucleus"/>
    <property type="evidence" value="ECO:0000318"/>
    <property type="project" value="GO_Central"/>
</dbReference>
<dbReference type="GO" id="GO:0046872">
    <property type="term" value="F:metal ion binding"/>
    <property type="evidence" value="ECO:0007669"/>
    <property type="project" value="UniProtKB-KW"/>
</dbReference>
<dbReference type="GO" id="GO:0000224">
    <property type="term" value="F:peptide-N4-(N-acetyl-beta-glucosaminyl)asparagine amidase activity"/>
    <property type="evidence" value="ECO:0000314"/>
    <property type="project" value="WormBase"/>
</dbReference>
<dbReference type="GO" id="GO:0047134">
    <property type="term" value="F:protein-disulfide reductase [NAD(P)H] activity"/>
    <property type="evidence" value="ECO:0000314"/>
    <property type="project" value="WormBase"/>
</dbReference>
<dbReference type="GO" id="GO:0015035">
    <property type="term" value="F:protein-disulfide reductase activity"/>
    <property type="evidence" value="ECO:0000314"/>
    <property type="project" value="WormBase"/>
</dbReference>
<dbReference type="GO" id="GO:0045454">
    <property type="term" value="P:cell redox homeostasis"/>
    <property type="evidence" value="ECO:0000316"/>
    <property type="project" value="WormBase"/>
</dbReference>
<dbReference type="GO" id="GO:0036503">
    <property type="term" value="P:ERAD pathway"/>
    <property type="evidence" value="ECO:0000316"/>
    <property type="project" value="WormBase"/>
</dbReference>
<dbReference type="GO" id="GO:0006516">
    <property type="term" value="P:glycoprotein catabolic process"/>
    <property type="evidence" value="ECO:0000250"/>
    <property type="project" value="UniProtKB"/>
</dbReference>
<dbReference type="GO" id="GO:0048671">
    <property type="term" value="P:negative regulation of collateral sprouting"/>
    <property type="evidence" value="ECO:0000315"/>
    <property type="project" value="WormBase"/>
</dbReference>
<dbReference type="GO" id="GO:0030513">
    <property type="term" value="P:positive regulation of BMP signaling pathway"/>
    <property type="evidence" value="ECO:0000318"/>
    <property type="project" value="GO_Central"/>
</dbReference>
<dbReference type="CDD" id="cd02947">
    <property type="entry name" value="TRX_family"/>
    <property type="match status" value="1"/>
</dbReference>
<dbReference type="FunFam" id="2.20.25.10:FF:000011">
    <property type="entry name" value="peptide-N(4)-(N-acetyl-beta- glucosaminyl)asparagine amidase"/>
    <property type="match status" value="1"/>
</dbReference>
<dbReference type="FunFam" id="2.60.120.1020:FF:000006">
    <property type="entry name" value="Peptide-N(4)-(N-acetyl-beta-glucosaminyl)asparagine amidase"/>
    <property type="match status" value="1"/>
</dbReference>
<dbReference type="FunFam" id="3.40.30.10:FF:000240">
    <property type="entry name" value="TPR repeat-containing thioredoxin TDX"/>
    <property type="match status" value="1"/>
</dbReference>
<dbReference type="Gene3D" id="2.20.25.10">
    <property type="match status" value="1"/>
</dbReference>
<dbReference type="Gene3D" id="3.10.620.30">
    <property type="match status" value="1"/>
</dbReference>
<dbReference type="Gene3D" id="3.40.30.10">
    <property type="entry name" value="Glutaredoxin"/>
    <property type="match status" value="1"/>
</dbReference>
<dbReference type="Gene3D" id="2.60.120.1020">
    <property type="entry name" value="Peptide N glycanase, PAW domain"/>
    <property type="match status" value="1"/>
</dbReference>
<dbReference type="InterPro" id="IPR008979">
    <property type="entry name" value="Galactose-bd-like_sf"/>
</dbReference>
<dbReference type="InterPro" id="IPR038765">
    <property type="entry name" value="Papain-like_cys_pep_sf"/>
</dbReference>
<dbReference type="InterPro" id="IPR038680">
    <property type="entry name" value="PAW_sf"/>
</dbReference>
<dbReference type="InterPro" id="IPR006588">
    <property type="entry name" value="Peptide_N_glycanase_PAW_dom"/>
</dbReference>
<dbReference type="InterPro" id="IPR050883">
    <property type="entry name" value="PNGase"/>
</dbReference>
<dbReference type="InterPro" id="IPR036249">
    <property type="entry name" value="Thioredoxin-like_sf"/>
</dbReference>
<dbReference type="InterPro" id="IPR017937">
    <property type="entry name" value="Thioredoxin_CS"/>
</dbReference>
<dbReference type="InterPro" id="IPR013766">
    <property type="entry name" value="Thioredoxin_domain"/>
</dbReference>
<dbReference type="InterPro" id="IPR002931">
    <property type="entry name" value="Transglutaminase-like"/>
</dbReference>
<dbReference type="PANTHER" id="PTHR12143">
    <property type="entry name" value="PEPTIDE N-GLYCANASE PNGASE -RELATED"/>
    <property type="match status" value="1"/>
</dbReference>
<dbReference type="PANTHER" id="PTHR12143:SF19">
    <property type="entry name" value="PEPTIDE-N(4)-(N-ACETYL-BETA-GLUCOSAMINYL)ASPARAGINE AMIDASE"/>
    <property type="match status" value="1"/>
</dbReference>
<dbReference type="Pfam" id="PF04721">
    <property type="entry name" value="PAW"/>
    <property type="match status" value="1"/>
</dbReference>
<dbReference type="Pfam" id="PF00085">
    <property type="entry name" value="Thioredoxin"/>
    <property type="match status" value="1"/>
</dbReference>
<dbReference type="Pfam" id="PF01841">
    <property type="entry name" value="Transglut_core"/>
    <property type="match status" value="1"/>
</dbReference>
<dbReference type="PRINTS" id="PR00421">
    <property type="entry name" value="THIOREDOXIN"/>
</dbReference>
<dbReference type="SMART" id="SM00613">
    <property type="entry name" value="PAW"/>
    <property type="match status" value="1"/>
</dbReference>
<dbReference type="SMART" id="SM00460">
    <property type="entry name" value="TGc"/>
    <property type="match status" value="1"/>
</dbReference>
<dbReference type="SUPFAM" id="SSF54001">
    <property type="entry name" value="Cysteine proteinases"/>
    <property type="match status" value="1"/>
</dbReference>
<dbReference type="SUPFAM" id="SSF49785">
    <property type="entry name" value="Galactose-binding domain-like"/>
    <property type="match status" value="1"/>
</dbReference>
<dbReference type="SUPFAM" id="SSF52833">
    <property type="entry name" value="Thioredoxin-like"/>
    <property type="match status" value="1"/>
</dbReference>
<dbReference type="PROSITE" id="PS51398">
    <property type="entry name" value="PAW"/>
    <property type="match status" value="1"/>
</dbReference>
<dbReference type="PROSITE" id="PS00194">
    <property type="entry name" value="THIOREDOXIN_1"/>
    <property type="match status" value="1"/>
</dbReference>
<dbReference type="PROSITE" id="PS51352">
    <property type="entry name" value="THIOREDOXIN_2"/>
    <property type="match status" value="1"/>
</dbReference>
<sequence>MPVTEVGSLPELNNILERSDANRLIIIDFFANWCGPCRMISPIFEQFSAEYGNATFLKVNCDVARDIVQRYNISAMPTFIFLKNRQQVDMVRGANQQAIAEKIRQHYSPTPANPNAASDSEKRFLEQFVKCSNVPRSYQDEVFKALARSVMPEELVGRAMTEGPRDEKAILKDLLHWFKTQFFTWFDRPTCPKCTLKCSTDGLQGTPTREEQKEGGASRVEVYICDGCNTEMRFPRYNNPAKLLQTRTGRCGEWANCFGLLLAALNLESRFIYDTTDHVWNEVYLLAEQRWCHVDPCENTMDRPLLYTRGWGKTLGYCIGYGSDHVVDVTWRYIWDSKKLVTQRNEVRQPVFENFLSKLNSRQAEGQTEPRKRELAVRRVCELMEMMAQEAKNHKIGWEKIGDDLGGRITGSEEWRRERGELGESGPKLLAEPIKLAPPTGPAQNYLEFNYDVITDTYSQPPEIGFSAQAFELENVQRVEETDWNMTYLCRKRGDAPGNISWHFDLKSLKKSIEKIEIRMAGIQKFEKGKAMAIACLGDSCMRLPIDCSALTIEDPKNAEILKITATLSGGEGAIGFQQAQIFRTELKRGGGARTESFSVKIWMKN</sequence>
<reference key="1">
    <citation type="journal article" date="1998" name="Science">
        <title>Genome sequence of the nematode C. elegans: a platform for investigating biology.</title>
        <authorList>
            <consortium name="The C. elegans sequencing consortium"/>
        </authorList>
    </citation>
    <scope>NUCLEOTIDE SEQUENCE [LARGE SCALE GENOMIC DNA]</scope>
    <source>
        <strain>Bristol N2</strain>
    </source>
</reference>
<reference key="2">
    <citation type="journal article" date="2000" name="J. Cell Biol.">
        <title>PNG1, a yeast gene encoding a highly conserved peptide:N-glycanase.</title>
        <authorList>
            <person name="Suzuki T."/>
            <person name="Park H."/>
            <person name="Hollingsworth N.M."/>
            <person name="Sternglanz R."/>
            <person name="Lennarz W.J."/>
        </authorList>
    </citation>
    <scope>NUCLEOTIDE SEQUENCE [MRNA] OF 65-606</scope>
</reference>
<reference key="3">
    <citation type="journal article" date="2007" name="Biochem. Biophys. Res. Commun.">
        <title>Dual enzymatic properties of the cytoplasmic peptide: N-glycanase in C. elegans.</title>
        <authorList>
            <person name="Suzuki T."/>
            <person name="Tanabe K."/>
            <person name="Hara I."/>
            <person name="Taniguchi N."/>
            <person name="Colavita A."/>
        </authorList>
    </citation>
    <scope>FUNCTION</scope>
    <scope>MUTAGENESIS OF CYS-251</scope>
</reference>
<reference key="4">
    <citation type="journal article" date="2007" name="J. Biochem.">
        <title>Unique peptide:N-glycanase of Caenorhabditis elegans has activity of protein disulphide reductase as well as of deglycosylation.</title>
        <authorList>
            <person name="Kato T."/>
            <person name="Kawahara A."/>
            <person name="Ashida H."/>
            <person name="Yamamoto K."/>
        </authorList>
    </citation>
    <scope>FUNCTION</scope>
    <scope>SUBCELLULAR LOCATION</scope>
    <scope>ACTIVITY REGULATION</scope>
</reference>
<reference key="5">
    <citation type="journal article" date="2016" name="Elife">
        <title>Proteasome dysfunction triggers activation of SKN-1A/Nrf1 by the aspartic protease DDI-1.</title>
        <authorList>
            <person name="Lehrbach N.J."/>
            <person name="Ruvkun G."/>
        </authorList>
    </citation>
    <scope>FUNCTION</scope>
    <scope>DISRUPTION PHENOTYPE</scope>
    <scope>MUTAGENESIS OF GLY-498</scope>
</reference>